<comment type="function">
    <text evidence="2">Cell wall formation.</text>
</comment>
<comment type="catalytic activity">
    <reaction evidence="2">
        <text>2 D-alanine + ATP = D-alanyl-D-alanine + ADP + phosphate + H(+)</text>
        <dbReference type="Rhea" id="RHEA:11224"/>
        <dbReference type="ChEBI" id="CHEBI:15378"/>
        <dbReference type="ChEBI" id="CHEBI:30616"/>
        <dbReference type="ChEBI" id="CHEBI:43474"/>
        <dbReference type="ChEBI" id="CHEBI:57416"/>
        <dbReference type="ChEBI" id="CHEBI:57822"/>
        <dbReference type="ChEBI" id="CHEBI:456216"/>
        <dbReference type="EC" id="6.3.2.4"/>
    </reaction>
</comment>
<comment type="cofactor">
    <cofactor evidence="1">
        <name>Mg(2+)</name>
        <dbReference type="ChEBI" id="CHEBI:18420"/>
    </cofactor>
    <cofactor evidence="1">
        <name>Mn(2+)</name>
        <dbReference type="ChEBI" id="CHEBI:29035"/>
    </cofactor>
    <text evidence="1">Binds 2 magnesium or manganese ions per subunit.</text>
</comment>
<comment type="pathway">
    <text evidence="2">Cell wall biogenesis; peptidoglycan biosynthesis.</text>
</comment>
<comment type="subcellular location">
    <subcellularLocation>
        <location evidence="2">Cytoplasm</location>
    </subcellularLocation>
</comment>
<comment type="similarity">
    <text evidence="2">Belongs to the D-alanine--D-alanine ligase family.</text>
</comment>
<feature type="chain" id="PRO_1000091209" description="D-alanine--D-alanine ligase">
    <location>
        <begin position="1"/>
        <end position="347"/>
    </location>
</feature>
<feature type="domain" description="ATP-grasp" evidence="2">
    <location>
        <begin position="131"/>
        <end position="333"/>
    </location>
</feature>
<feature type="binding site" evidence="2">
    <location>
        <begin position="161"/>
        <end position="216"/>
    </location>
    <ligand>
        <name>ATP</name>
        <dbReference type="ChEBI" id="CHEBI:30616"/>
    </ligand>
</feature>
<feature type="binding site" evidence="2">
    <location>
        <position position="287"/>
    </location>
    <ligand>
        <name>Mg(2+)</name>
        <dbReference type="ChEBI" id="CHEBI:18420"/>
        <label>1</label>
    </ligand>
</feature>
<feature type="binding site" evidence="2">
    <location>
        <position position="300"/>
    </location>
    <ligand>
        <name>Mg(2+)</name>
        <dbReference type="ChEBI" id="CHEBI:18420"/>
        <label>1</label>
    </ligand>
</feature>
<feature type="binding site" evidence="2">
    <location>
        <position position="300"/>
    </location>
    <ligand>
        <name>Mg(2+)</name>
        <dbReference type="ChEBI" id="CHEBI:18420"/>
        <label>2</label>
    </ligand>
</feature>
<feature type="binding site" evidence="2">
    <location>
        <position position="302"/>
    </location>
    <ligand>
        <name>Mg(2+)</name>
        <dbReference type="ChEBI" id="CHEBI:18420"/>
        <label>2</label>
    </ligand>
</feature>
<reference key="1">
    <citation type="journal article" date="1998" name="Microbiology">
        <title>Unconventional organization of the division and cell wall gene cluster of Streptococcus pneumoniae.</title>
        <authorList>
            <person name="Massidda O."/>
            <person name="Anderluzzi D."/>
            <person name="Friedli L."/>
            <person name="Feger G."/>
        </authorList>
    </citation>
    <scope>NUCLEOTIDE SEQUENCE [GENOMIC DNA]</scope>
</reference>
<reference key="2">
    <citation type="journal article" date="2001" name="Microb. Drug Resist.">
        <title>Annotated draft genomic sequence from a Streptococcus pneumoniae type 19F clinical isolate.</title>
        <authorList>
            <person name="Dopazo J."/>
            <person name="Mendoza A."/>
            <person name="Herrero J."/>
            <person name="Caldara F."/>
            <person name="Humbert Y."/>
            <person name="Friedli L."/>
            <person name="Guerrier M."/>
            <person name="Grand-Schenk E."/>
            <person name="Gandin C."/>
            <person name="de Francesco M."/>
            <person name="Polissi A."/>
            <person name="Buell G."/>
            <person name="Feger G."/>
            <person name="Garcia E."/>
            <person name="Peitsch M."/>
            <person name="Garcia-Bustos J.F."/>
        </authorList>
    </citation>
    <scope>NUCLEOTIDE SEQUENCE [LARGE SCALE GENOMIC DNA]</scope>
    <source>
        <strain>G54</strain>
    </source>
</reference>
<reference key="3">
    <citation type="submission" date="2008-03" db="EMBL/GenBank/DDBJ databases">
        <title>Pneumococcal beta glucoside metabolism investigated by whole genome comparison.</title>
        <authorList>
            <person name="Mulas L."/>
            <person name="Trappetti C."/>
            <person name="Hakenbeck R."/>
            <person name="Iannelli F."/>
            <person name="Pozzi G."/>
            <person name="Davidsen T.M."/>
            <person name="Tettelin H."/>
            <person name="Oggioni M."/>
        </authorList>
    </citation>
    <scope>NUCLEOTIDE SEQUENCE [LARGE SCALE GENOMIC DNA]</scope>
    <source>
        <strain>G54</strain>
    </source>
</reference>
<gene>
    <name evidence="2" type="primary">ddl</name>
    <name type="ordered locus">SPG_1580</name>
</gene>
<name>DDL_STRP4</name>
<sequence length="347" mass="38717">MKQTIILLYGGRSAEREVSVLSAESVMRAVNYDRFTVKTFFISQSGDFIKTQEFSHAPGQEDRLMTNETIDWDKKVAPSAIYEEGAVVFPVLHGPMGEDGSVQGFLEVLKMPYVGCNILSSSLAMDKITTKRVLESAGIAQVPYVAIVEGDDVTAKIAEVEEKLAYPVFTKPSNMGSSVGISKSENQEELRQALKLAFRYDSRVLVEQGVNAREIEVGLLGNYDVKSTLPGEVVKDVAFYDYDAKYIDNKITMDIPAKISDDVVAVMRQNAETAFRAIGGLGLSRCDFFYTDKGEIFLNELNTMPGFTQWSMYPLLWDNMGISYPELIERLVDLAKESFDKREAHLI</sequence>
<accession>B5E721</accession>
<accession>O54631</accession>
<organism>
    <name type="scientific">Streptococcus pneumoniae serotype 19F (strain G54)</name>
    <dbReference type="NCBI Taxonomy" id="512566"/>
    <lineage>
        <taxon>Bacteria</taxon>
        <taxon>Bacillati</taxon>
        <taxon>Bacillota</taxon>
        <taxon>Bacilli</taxon>
        <taxon>Lactobacillales</taxon>
        <taxon>Streptococcaceae</taxon>
        <taxon>Streptococcus</taxon>
    </lineage>
</organism>
<keyword id="KW-0067">ATP-binding</keyword>
<keyword id="KW-0133">Cell shape</keyword>
<keyword id="KW-0961">Cell wall biogenesis/degradation</keyword>
<keyword id="KW-0963">Cytoplasm</keyword>
<keyword id="KW-0436">Ligase</keyword>
<keyword id="KW-0460">Magnesium</keyword>
<keyword id="KW-0464">Manganese</keyword>
<keyword id="KW-0479">Metal-binding</keyword>
<keyword id="KW-0547">Nucleotide-binding</keyword>
<keyword id="KW-0573">Peptidoglycan synthesis</keyword>
<protein>
    <recommendedName>
        <fullName evidence="2">D-alanine--D-alanine ligase</fullName>
        <ecNumber evidence="2">6.3.2.4</ecNumber>
    </recommendedName>
    <alternativeName>
        <fullName evidence="2">D-Ala-D-Ala ligase</fullName>
    </alternativeName>
    <alternativeName>
        <fullName evidence="2">D-alanylalanine synthetase</fullName>
    </alternativeName>
</protein>
<proteinExistence type="inferred from homology"/>
<dbReference type="EC" id="6.3.2.4" evidence="2"/>
<dbReference type="EMBL" id="AF068901">
    <property type="protein sequence ID" value="AAC95435.1"/>
    <property type="molecule type" value="Genomic_DNA"/>
</dbReference>
<dbReference type="EMBL" id="CP001015">
    <property type="protein sequence ID" value="ACF55674.1"/>
    <property type="molecule type" value="Genomic_DNA"/>
</dbReference>
<dbReference type="SMR" id="B5E721"/>
<dbReference type="KEGG" id="spx:SPG_1580"/>
<dbReference type="HOGENOM" id="CLU_039268_0_0_9"/>
<dbReference type="UniPathway" id="UPA00219"/>
<dbReference type="GO" id="GO:0005829">
    <property type="term" value="C:cytosol"/>
    <property type="evidence" value="ECO:0007669"/>
    <property type="project" value="TreeGrafter"/>
</dbReference>
<dbReference type="GO" id="GO:0005524">
    <property type="term" value="F:ATP binding"/>
    <property type="evidence" value="ECO:0007669"/>
    <property type="project" value="UniProtKB-KW"/>
</dbReference>
<dbReference type="GO" id="GO:0008716">
    <property type="term" value="F:D-alanine-D-alanine ligase activity"/>
    <property type="evidence" value="ECO:0007669"/>
    <property type="project" value="UniProtKB-UniRule"/>
</dbReference>
<dbReference type="GO" id="GO:0046872">
    <property type="term" value="F:metal ion binding"/>
    <property type="evidence" value="ECO:0007669"/>
    <property type="project" value="UniProtKB-KW"/>
</dbReference>
<dbReference type="GO" id="GO:0071555">
    <property type="term" value="P:cell wall organization"/>
    <property type="evidence" value="ECO:0007669"/>
    <property type="project" value="UniProtKB-KW"/>
</dbReference>
<dbReference type="GO" id="GO:0009252">
    <property type="term" value="P:peptidoglycan biosynthetic process"/>
    <property type="evidence" value="ECO:0007669"/>
    <property type="project" value="UniProtKB-UniRule"/>
</dbReference>
<dbReference type="GO" id="GO:0008360">
    <property type="term" value="P:regulation of cell shape"/>
    <property type="evidence" value="ECO:0007669"/>
    <property type="project" value="UniProtKB-KW"/>
</dbReference>
<dbReference type="FunFam" id="3.30.1490.20:FF:000007">
    <property type="entry name" value="D-alanine--D-alanine ligase"/>
    <property type="match status" value="1"/>
</dbReference>
<dbReference type="FunFam" id="3.30.470.20:FF:000008">
    <property type="entry name" value="D-alanine--D-alanine ligase"/>
    <property type="match status" value="1"/>
</dbReference>
<dbReference type="FunFam" id="3.40.50.20:FF:000029">
    <property type="entry name" value="D-alanine--D-alanine ligase"/>
    <property type="match status" value="1"/>
</dbReference>
<dbReference type="Gene3D" id="3.40.50.20">
    <property type="match status" value="1"/>
</dbReference>
<dbReference type="Gene3D" id="3.30.1490.20">
    <property type="entry name" value="ATP-grasp fold, A domain"/>
    <property type="match status" value="1"/>
</dbReference>
<dbReference type="Gene3D" id="3.30.470.20">
    <property type="entry name" value="ATP-grasp fold, B domain"/>
    <property type="match status" value="1"/>
</dbReference>
<dbReference type="HAMAP" id="MF_00047">
    <property type="entry name" value="Dala_Dala_lig"/>
    <property type="match status" value="1"/>
</dbReference>
<dbReference type="InterPro" id="IPR011761">
    <property type="entry name" value="ATP-grasp"/>
</dbReference>
<dbReference type="InterPro" id="IPR013815">
    <property type="entry name" value="ATP_grasp_subdomain_1"/>
</dbReference>
<dbReference type="InterPro" id="IPR000291">
    <property type="entry name" value="D-Ala_lig_Van_CS"/>
</dbReference>
<dbReference type="InterPro" id="IPR005905">
    <property type="entry name" value="D_ala_D_ala"/>
</dbReference>
<dbReference type="InterPro" id="IPR011095">
    <property type="entry name" value="Dala_Dala_lig_C"/>
</dbReference>
<dbReference type="InterPro" id="IPR011127">
    <property type="entry name" value="Dala_Dala_lig_N"/>
</dbReference>
<dbReference type="InterPro" id="IPR016185">
    <property type="entry name" value="PreATP-grasp_dom_sf"/>
</dbReference>
<dbReference type="NCBIfam" id="TIGR01205">
    <property type="entry name" value="D_ala_D_alaTIGR"/>
    <property type="match status" value="1"/>
</dbReference>
<dbReference type="NCBIfam" id="NF002528">
    <property type="entry name" value="PRK01966.1-4"/>
    <property type="match status" value="1"/>
</dbReference>
<dbReference type="NCBIfam" id="NF002529">
    <property type="entry name" value="PRK01966.1-5"/>
    <property type="match status" value="1"/>
</dbReference>
<dbReference type="PANTHER" id="PTHR23132">
    <property type="entry name" value="D-ALANINE--D-ALANINE LIGASE"/>
    <property type="match status" value="1"/>
</dbReference>
<dbReference type="PANTHER" id="PTHR23132:SF25">
    <property type="entry name" value="D-ALANINE--D-ALANINE LIGASE A"/>
    <property type="match status" value="1"/>
</dbReference>
<dbReference type="Pfam" id="PF07478">
    <property type="entry name" value="Dala_Dala_lig_C"/>
    <property type="match status" value="1"/>
</dbReference>
<dbReference type="Pfam" id="PF01820">
    <property type="entry name" value="Dala_Dala_lig_N"/>
    <property type="match status" value="1"/>
</dbReference>
<dbReference type="PIRSF" id="PIRSF039102">
    <property type="entry name" value="Ddl/VanB"/>
    <property type="match status" value="1"/>
</dbReference>
<dbReference type="SUPFAM" id="SSF56059">
    <property type="entry name" value="Glutathione synthetase ATP-binding domain-like"/>
    <property type="match status" value="1"/>
</dbReference>
<dbReference type="SUPFAM" id="SSF52440">
    <property type="entry name" value="PreATP-grasp domain"/>
    <property type="match status" value="1"/>
</dbReference>
<dbReference type="PROSITE" id="PS50975">
    <property type="entry name" value="ATP_GRASP"/>
    <property type="match status" value="1"/>
</dbReference>
<dbReference type="PROSITE" id="PS00843">
    <property type="entry name" value="DALA_DALA_LIGASE_1"/>
    <property type="match status" value="1"/>
</dbReference>
<dbReference type="PROSITE" id="PS00844">
    <property type="entry name" value="DALA_DALA_LIGASE_2"/>
    <property type="match status" value="1"/>
</dbReference>
<evidence type="ECO:0000250" key="1"/>
<evidence type="ECO:0000255" key="2">
    <source>
        <dbReference type="HAMAP-Rule" id="MF_00047"/>
    </source>
</evidence>